<organism>
    <name type="scientific">Nitratiruptor sp. (strain SB155-2)</name>
    <dbReference type="NCBI Taxonomy" id="387092"/>
    <lineage>
        <taxon>Bacteria</taxon>
        <taxon>Pseudomonadati</taxon>
        <taxon>Campylobacterota</taxon>
        <taxon>Epsilonproteobacteria</taxon>
        <taxon>Nautiliales</taxon>
        <taxon>Nitratiruptoraceae</taxon>
        <taxon>Nitratiruptor</taxon>
    </lineage>
</organism>
<name>ATPG_NITSB</name>
<evidence type="ECO:0000255" key="1">
    <source>
        <dbReference type="HAMAP-Rule" id="MF_00815"/>
    </source>
</evidence>
<gene>
    <name evidence="1" type="primary">atpG</name>
    <name type="ordered locus">NIS_1221</name>
</gene>
<protein>
    <recommendedName>
        <fullName evidence="1">ATP synthase gamma chain</fullName>
    </recommendedName>
    <alternativeName>
        <fullName evidence="1">ATP synthase F1 sector gamma subunit</fullName>
    </alternativeName>
    <alternativeName>
        <fullName evidence="1">F-ATPase gamma subunit</fullName>
    </alternativeName>
</protein>
<accession>A6Q4C1</accession>
<sequence>MANLKDIKRKIGSVKNTQKTTRAMKLVSTAKLRRTEELAKRTKYFEDAINATLRQIASSIKKYKVGGIKGRYFEEPEAVAVVDIIFITADKGLCGGFNYQTIKTVRSLLEEYQSKGAKVRLRAVGKKGIEFFNFQGYELNDSVVGLSSSPNYEEAKNYILKSVGDFLEGKTDKVILIHNGYKNMITQEMKAIQLLPIDISKYTEEVDGSMLEMEPDESEKVLESLLNKYIEFNMYYALIDSLAAEHSARMQAMDAATNNAKEMVRSLTISYNKARQESITTELIEIISGMEAMK</sequence>
<keyword id="KW-0066">ATP synthesis</keyword>
<keyword id="KW-0997">Cell inner membrane</keyword>
<keyword id="KW-1003">Cell membrane</keyword>
<keyword id="KW-0139">CF(1)</keyword>
<keyword id="KW-0375">Hydrogen ion transport</keyword>
<keyword id="KW-0406">Ion transport</keyword>
<keyword id="KW-0472">Membrane</keyword>
<keyword id="KW-1185">Reference proteome</keyword>
<keyword id="KW-0813">Transport</keyword>
<comment type="function">
    <text evidence="1">Produces ATP from ADP in the presence of a proton gradient across the membrane. The gamma chain is believed to be important in regulating ATPase activity and the flow of protons through the CF(0) complex.</text>
</comment>
<comment type="subunit">
    <text evidence="1">F-type ATPases have 2 components, CF(1) - the catalytic core - and CF(0) - the membrane proton channel. CF(1) has five subunits: alpha(3), beta(3), gamma(1), delta(1), epsilon(1). CF(0) has three main subunits: a, b and c.</text>
</comment>
<comment type="subcellular location">
    <subcellularLocation>
        <location evidence="1">Cell inner membrane</location>
        <topology evidence="1">Peripheral membrane protein</topology>
    </subcellularLocation>
</comment>
<comment type="similarity">
    <text evidence="1">Belongs to the ATPase gamma chain family.</text>
</comment>
<proteinExistence type="inferred from homology"/>
<dbReference type="EMBL" id="AP009178">
    <property type="protein sequence ID" value="BAF70330.1"/>
    <property type="molecule type" value="Genomic_DNA"/>
</dbReference>
<dbReference type="RefSeq" id="WP_012082593.1">
    <property type="nucleotide sequence ID" value="NC_009662.1"/>
</dbReference>
<dbReference type="SMR" id="A6Q4C1"/>
<dbReference type="FunCoup" id="A6Q4C1">
    <property type="interactions" value="338"/>
</dbReference>
<dbReference type="STRING" id="387092.NIS_1221"/>
<dbReference type="KEGG" id="nis:NIS_1221"/>
<dbReference type="eggNOG" id="COG0224">
    <property type="taxonomic scope" value="Bacteria"/>
</dbReference>
<dbReference type="HOGENOM" id="CLU_050669_0_1_7"/>
<dbReference type="InParanoid" id="A6Q4C1"/>
<dbReference type="OrthoDB" id="9812769at2"/>
<dbReference type="Proteomes" id="UP000001118">
    <property type="component" value="Chromosome"/>
</dbReference>
<dbReference type="GO" id="GO:0005886">
    <property type="term" value="C:plasma membrane"/>
    <property type="evidence" value="ECO:0007669"/>
    <property type="project" value="UniProtKB-SubCell"/>
</dbReference>
<dbReference type="GO" id="GO:0045259">
    <property type="term" value="C:proton-transporting ATP synthase complex"/>
    <property type="evidence" value="ECO:0007669"/>
    <property type="project" value="UniProtKB-KW"/>
</dbReference>
<dbReference type="GO" id="GO:0005524">
    <property type="term" value="F:ATP binding"/>
    <property type="evidence" value="ECO:0007669"/>
    <property type="project" value="UniProtKB-UniRule"/>
</dbReference>
<dbReference type="GO" id="GO:0046933">
    <property type="term" value="F:proton-transporting ATP synthase activity, rotational mechanism"/>
    <property type="evidence" value="ECO:0007669"/>
    <property type="project" value="UniProtKB-UniRule"/>
</dbReference>
<dbReference type="GO" id="GO:0042777">
    <property type="term" value="P:proton motive force-driven plasma membrane ATP synthesis"/>
    <property type="evidence" value="ECO:0007669"/>
    <property type="project" value="UniProtKB-UniRule"/>
</dbReference>
<dbReference type="CDD" id="cd12151">
    <property type="entry name" value="F1-ATPase_gamma"/>
    <property type="match status" value="1"/>
</dbReference>
<dbReference type="FunFam" id="1.10.287.80:FF:000007">
    <property type="entry name" value="ATP synthase gamma chain"/>
    <property type="match status" value="1"/>
</dbReference>
<dbReference type="FunFam" id="3.40.1380.10:FF:000006">
    <property type="entry name" value="ATP synthase gamma chain"/>
    <property type="match status" value="1"/>
</dbReference>
<dbReference type="Gene3D" id="3.40.1380.10">
    <property type="match status" value="1"/>
</dbReference>
<dbReference type="Gene3D" id="1.10.287.80">
    <property type="entry name" value="ATP synthase, gamma subunit, helix hairpin domain"/>
    <property type="match status" value="1"/>
</dbReference>
<dbReference type="HAMAP" id="MF_00815">
    <property type="entry name" value="ATP_synth_gamma_bact"/>
    <property type="match status" value="1"/>
</dbReference>
<dbReference type="InterPro" id="IPR035968">
    <property type="entry name" value="ATP_synth_F1_ATPase_gsu"/>
</dbReference>
<dbReference type="InterPro" id="IPR000131">
    <property type="entry name" value="ATP_synth_F1_gsu"/>
</dbReference>
<dbReference type="NCBIfam" id="TIGR01146">
    <property type="entry name" value="ATPsyn_F1gamma"/>
    <property type="match status" value="1"/>
</dbReference>
<dbReference type="PANTHER" id="PTHR11693">
    <property type="entry name" value="ATP SYNTHASE GAMMA CHAIN"/>
    <property type="match status" value="1"/>
</dbReference>
<dbReference type="PANTHER" id="PTHR11693:SF22">
    <property type="entry name" value="ATP SYNTHASE SUBUNIT GAMMA, MITOCHONDRIAL"/>
    <property type="match status" value="1"/>
</dbReference>
<dbReference type="Pfam" id="PF00231">
    <property type="entry name" value="ATP-synt"/>
    <property type="match status" value="1"/>
</dbReference>
<dbReference type="PRINTS" id="PR00126">
    <property type="entry name" value="ATPASEGAMMA"/>
</dbReference>
<dbReference type="SUPFAM" id="SSF52943">
    <property type="entry name" value="ATP synthase (F1-ATPase), gamma subunit"/>
    <property type="match status" value="1"/>
</dbReference>
<reference key="1">
    <citation type="journal article" date="2007" name="Proc. Natl. Acad. Sci. U.S.A.">
        <title>Deep-sea vent epsilon-proteobacterial genomes provide insights into emergence of pathogens.</title>
        <authorList>
            <person name="Nakagawa S."/>
            <person name="Takaki Y."/>
            <person name="Shimamura S."/>
            <person name="Reysenbach A.-L."/>
            <person name="Takai K."/>
            <person name="Horikoshi K."/>
        </authorList>
    </citation>
    <scope>NUCLEOTIDE SEQUENCE [LARGE SCALE GENOMIC DNA]</scope>
    <source>
        <strain>SB155-2</strain>
    </source>
</reference>
<feature type="chain" id="PRO_1000053270" description="ATP synthase gamma chain">
    <location>
        <begin position="1"/>
        <end position="294"/>
    </location>
</feature>